<dbReference type="EC" id="1.5.1.5" evidence="1"/>
<dbReference type="EC" id="3.5.4.9" evidence="1"/>
<dbReference type="EMBL" id="CP000747">
    <property type="protein sequence ID" value="ACG78444.1"/>
    <property type="molecule type" value="Genomic_DNA"/>
</dbReference>
<dbReference type="RefSeq" id="WP_012522586.1">
    <property type="nucleotide sequence ID" value="NC_011144.1"/>
</dbReference>
<dbReference type="SMR" id="B4RE11"/>
<dbReference type="STRING" id="450851.PHZ_c2033"/>
<dbReference type="KEGG" id="pzu:PHZ_c2033"/>
<dbReference type="eggNOG" id="COG0190">
    <property type="taxonomic scope" value="Bacteria"/>
</dbReference>
<dbReference type="HOGENOM" id="CLU_034045_2_1_5"/>
<dbReference type="OrthoDB" id="9803580at2"/>
<dbReference type="UniPathway" id="UPA00193"/>
<dbReference type="Proteomes" id="UP000001868">
    <property type="component" value="Chromosome"/>
</dbReference>
<dbReference type="GO" id="GO:0005829">
    <property type="term" value="C:cytosol"/>
    <property type="evidence" value="ECO:0007669"/>
    <property type="project" value="TreeGrafter"/>
</dbReference>
<dbReference type="GO" id="GO:0004477">
    <property type="term" value="F:methenyltetrahydrofolate cyclohydrolase activity"/>
    <property type="evidence" value="ECO:0007669"/>
    <property type="project" value="UniProtKB-UniRule"/>
</dbReference>
<dbReference type="GO" id="GO:0004488">
    <property type="term" value="F:methylenetetrahydrofolate dehydrogenase (NADP+) activity"/>
    <property type="evidence" value="ECO:0007669"/>
    <property type="project" value="UniProtKB-UniRule"/>
</dbReference>
<dbReference type="GO" id="GO:0000105">
    <property type="term" value="P:L-histidine biosynthetic process"/>
    <property type="evidence" value="ECO:0007669"/>
    <property type="project" value="UniProtKB-KW"/>
</dbReference>
<dbReference type="GO" id="GO:0009086">
    <property type="term" value="P:methionine biosynthetic process"/>
    <property type="evidence" value="ECO:0007669"/>
    <property type="project" value="UniProtKB-KW"/>
</dbReference>
<dbReference type="GO" id="GO:0006164">
    <property type="term" value="P:purine nucleotide biosynthetic process"/>
    <property type="evidence" value="ECO:0007669"/>
    <property type="project" value="UniProtKB-KW"/>
</dbReference>
<dbReference type="GO" id="GO:0035999">
    <property type="term" value="P:tetrahydrofolate interconversion"/>
    <property type="evidence" value="ECO:0007669"/>
    <property type="project" value="UniProtKB-UniRule"/>
</dbReference>
<dbReference type="CDD" id="cd01080">
    <property type="entry name" value="NAD_bind_m-THF_DH_Cyclohyd"/>
    <property type="match status" value="1"/>
</dbReference>
<dbReference type="FunFam" id="3.40.50.720:FF:000006">
    <property type="entry name" value="Bifunctional protein FolD"/>
    <property type="match status" value="1"/>
</dbReference>
<dbReference type="FunFam" id="3.40.50.10860:FF:000005">
    <property type="entry name" value="C-1-tetrahydrofolate synthase, cytoplasmic, putative"/>
    <property type="match status" value="1"/>
</dbReference>
<dbReference type="Gene3D" id="3.40.50.10860">
    <property type="entry name" value="Leucine Dehydrogenase, chain A, domain 1"/>
    <property type="match status" value="1"/>
</dbReference>
<dbReference type="Gene3D" id="3.40.50.720">
    <property type="entry name" value="NAD(P)-binding Rossmann-like Domain"/>
    <property type="match status" value="1"/>
</dbReference>
<dbReference type="HAMAP" id="MF_01576">
    <property type="entry name" value="THF_DHG_CYH"/>
    <property type="match status" value="1"/>
</dbReference>
<dbReference type="InterPro" id="IPR046346">
    <property type="entry name" value="Aminoacid_DH-like_N_sf"/>
</dbReference>
<dbReference type="InterPro" id="IPR036291">
    <property type="entry name" value="NAD(P)-bd_dom_sf"/>
</dbReference>
<dbReference type="InterPro" id="IPR000672">
    <property type="entry name" value="THF_DH/CycHdrlase"/>
</dbReference>
<dbReference type="InterPro" id="IPR020630">
    <property type="entry name" value="THF_DH/CycHdrlase_cat_dom"/>
</dbReference>
<dbReference type="InterPro" id="IPR020867">
    <property type="entry name" value="THF_DH/CycHdrlase_CS"/>
</dbReference>
<dbReference type="InterPro" id="IPR020631">
    <property type="entry name" value="THF_DH/CycHdrlase_NAD-bd_dom"/>
</dbReference>
<dbReference type="NCBIfam" id="NF010783">
    <property type="entry name" value="PRK14186.1"/>
    <property type="match status" value="1"/>
</dbReference>
<dbReference type="NCBIfam" id="NF010785">
    <property type="entry name" value="PRK14188.1"/>
    <property type="match status" value="1"/>
</dbReference>
<dbReference type="PANTHER" id="PTHR48099:SF5">
    <property type="entry name" value="C-1-TETRAHYDROFOLATE SYNTHASE, CYTOPLASMIC"/>
    <property type="match status" value="1"/>
</dbReference>
<dbReference type="PANTHER" id="PTHR48099">
    <property type="entry name" value="C-1-TETRAHYDROFOLATE SYNTHASE, CYTOPLASMIC-RELATED"/>
    <property type="match status" value="1"/>
</dbReference>
<dbReference type="Pfam" id="PF00763">
    <property type="entry name" value="THF_DHG_CYH"/>
    <property type="match status" value="1"/>
</dbReference>
<dbReference type="Pfam" id="PF02882">
    <property type="entry name" value="THF_DHG_CYH_C"/>
    <property type="match status" value="1"/>
</dbReference>
<dbReference type="PRINTS" id="PR00085">
    <property type="entry name" value="THFDHDRGNASE"/>
</dbReference>
<dbReference type="SUPFAM" id="SSF53223">
    <property type="entry name" value="Aminoacid dehydrogenase-like, N-terminal domain"/>
    <property type="match status" value="1"/>
</dbReference>
<dbReference type="SUPFAM" id="SSF51735">
    <property type="entry name" value="NAD(P)-binding Rossmann-fold domains"/>
    <property type="match status" value="1"/>
</dbReference>
<dbReference type="PROSITE" id="PS00766">
    <property type="entry name" value="THF_DHG_CYH_1"/>
    <property type="match status" value="1"/>
</dbReference>
<reference key="1">
    <citation type="journal article" date="2008" name="BMC Genomics">
        <title>Complete genome of Phenylobacterium zucineum - a novel facultative intracellular bacterium isolated from human erythroleukemia cell line K562.</title>
        <authorList>
            <person name="Luo Y."/>
            <person name="Xu X."/>
            <person name="Ding Z."/>
            <person name="Liu Z."/>
            <person name="Zhang B."/>
            <person name="Yan Z."/>
            <person name="Sun J."/>
            <person name="Hu S."/>
            <person name="Hu X."/>
        </authorList>
    </citation>
    <scope>NUCLEOTIDE SEQUENCE [LARGE SCALE GENOMIC DNA]</scope>
    <source>
        <strain>HLK1</strain>
    </source>
</reference>
<name>FOLD_PHEZH</name>
<evidence type="ECO:0000255" key="1">
    <source>
        <dbReference type="HAMAP-Rule" id="MF_01576"/>
    </source>
</evidence>
<protein>
    <recommendedName>
        <fullName evidence="1">Bifunctional protein FolD</fullName>
    </recommendedName>
    <domain>
        <recommendedName>
            <fullName evidence="1">Methylenetetrahydrofolate dehydrogenase</fullName>
            <ecNumber evidence="1">1.5.1.5</ecNumber>
        </recommendedName>
    </domain>
    <domain>
        <recommendedName>
            <fullName evidence="1">Methenyltetrahydrofolate cyclohydrolase</fullName>
            <ecNumber evidence="1">3.5.4.9</ecNumber>
        </recommendedName>
    </domain>
</protein>
<organism>
    <name type="scientific">Phenylobacterium zucineum (strain HLK1)</name>
    <dbReference type="NCBI Taxonomy" id="450851"/>
    <lineage>
        <taxon>Bacteria</taxon>
        <taxon>Pseudomonadati</taxon>
        <taxon>Pseudomonadota</taxon>
        <taxon>Alphaproteobacteria</taxon>
        <taxon>Caulobacterales</taxon>
        <taxon>Caulobacteraceae</taxon>
        <taxon>Phenylobacterium</taxon>
    </lineage>
</organism>
<gene>
    <name evidence="1" type="primary">folD</name>
    <name type="ordered locus">PHZ_c2033</name>
</gene>
<sequence>MTAKIIDGKVLAERLRGQVADEVARLRADYRLQPGLAVVLVGEDPASQVYVRSKGEHSLAVGMHSVTHRLPADTRQDELLRLVAELNADPLIHGILVQLPLPKHLDEKAVIAAISPDKDVDGLHVVNAGRLASGLPALVPCTPLGCLIMLRETLGDLTGKRAVVVGRSLLVGKPVAQLLLQADCTVTIAHSRTVDLPAVCREADILVAAVGRPRMIRGDWIKPGATVIDVGINRVPFDDPEKAAQGKTKLVGDVHYKEALQVAGAVTPVPGGVGLMTVACLLQNTVTAAKRLAGIEG</sequence>
<feature type="chain" id="PRO_1000147506" description="Bifunctional protein FolD">
    <location>
        <begin position="1"/>
        <end position="297"/>
    </location>
</feature>
<feature type="binding site" evidence="1">
    <location>
        <begin position="166"/>
        <end position="168"/>
    </location>
    <ligand>
        <name>NADP(+)</name>
        <dbReference type="ChEBI" id="CHEBI:58349"/>
    </ligand>
</feature>
<feature type="binding site" evidence="1">
    <location>
        <position position="191"/>
    </location>
    <ligand>
        <name>NADP(+)</name>
        <dbReference type="ChEBI" id="CHEBI:58349"/>
    </ligand>
</feature>
<feature type="binding site" evidence="1">
    <location>
        <position position="232"/>
    </location>
    <ligand>
        <name>NADP(+)</name>
        <dbReference type="ChEBI" id="CHEBI:58349"/>
    </ligand>
</feature>
<comment type="function">
    <text evidence="1">Catalyzes the oxidation of 5,10-methylenetetrahydrofolate to 5,10-methenyltetrahydrofolate and then the hydrolysis of 5,10-methenyltetrahydrofolate to 10-formyltetrahydrofolate.</text>
</comment>
<comment type="catalytic activity">
    <reaction evidence="1">
        <text>(6R)-5,10-methylene-5,6,7,8-tetrahydrofolate + NADP(+) = (6R)-5,10-methenyltetrahydrofolate + NADPH</text>
        <dbReference type="Rhea" id="RHEA:22812"/>
        <dbReference type="ChEBI" id="CHEBI:15636"/>
        <dbReference type="ChEBI" id="CHEBI:57455"/>
        <dbReference type="ChEBI" id="CHEBI:57783"/>
        <dbReference type="ChEBI" id="CHEBI:58349"/>
        <dbReference type="EC" id="1.5.1.5"/>
    </reaction>
</comment>
<comment type="catalytic activity">
    <reaction evidence="1">
        <text>(6R)-5,10-methenyltetrahydrofolate + H2O = (6R)-10-formyltetrahydrofolate + H(+)</text>
        <dbReference type="Rhea" id="RHEA:23700"/>
        <dbReference type="ChEBI" id="CHEBI:15377"/>
        <dbReference type="ChEBI" id="CHEBI:15378"/>
        <dbReference type="ChEBI" id="CHEBI:57455"/>
        <dbReference type="ChEBI" id="CHEBI:195366"/>
        <dbReference type="EC" id="3.5.4.9"/>
    </reaction>
</comment>
<comment type="pathway">
    <text evidence="1">One-carbon metabolism; tetrahydrofolate interconversion.</text>
</comment>
<comment type="subunit">
    <text evidence="1">Homodimer.</text>
</comment>
<comment type="similarity">
    <text evidence="1">Belongs to the tetrahydrofolate dehydrogenase/cyclohydrolase family.</text>
</comment>
<keyword id="KW-0028">Amino-acid biosynthesis</keyword>
<keyword id="KW-0368">Histidine biosynthesis</keyword>
<keyword id="KW-0378">Hydrolase</keyword>
<keyword id="KW-0486">Methionine biosynthesis</keyword>
<keyword id="KW-0511">Multifunctional enzyme</keyword>
<keyword id="KW-0521">NADP</keyword>
<keyword id="KW-0554">One-carbon metabolism</keyword>
<keyword id="KW-0560">Oxidoreductase</keyword>
<keyword id="KW-0658">Purine biosynthesis</keyword>
<keyword id="KW-1185">Reference proteome</keyword>
<accession>B4RE11</accession>
<proteinExistence type="inferred from homology"/>